<comment type="function">
    <text evidence="1">Initiates the rapid degradation of small, acid-soluble proteins during spore germination.</text>
</comment>
<comment type="catalytic activity">
    <reaction evidence="1">
        <text>Endopeptidase action with P4 Glu or Asp, P1 preferably Glu &gt; Asp, P1' hydrophobic and P2' Ala.</text>
        <dbReference type="EC" id="3.4.24.78"/>
    </reaction>
</comment>
<comment type="subunit">
    <text evidence="1">Homotetramer.</text>
</comment>
<comment type="PTM">
    <text evidence="1">Autoproteolytically processed. The inactive tetrameric zymogen termed p46 autoprocesses to a smaller form termed p41, which is active only during spore germination.</text>
</comment>
<comment type="similarity">
    <text evidence="1">Belongs to the peptidase A25 family.</text>
</comment>
<evidence type="ECO:0000255" key="1">
    <source>
        <dbReference type="HAMAP-Rule" id="MF_00626"/>
    </source>
</evidence>
<dbReference type="EC" id="3.4.24.78" evidence="1"/>
<dbReference type="EMBL" id="AE017194">
    <property type="protein sequence ID" value="AAS43303.1"/>
    <property type="molecule type" value="Genomic_DNA"/>
</dbReference>
<dbReference type="SMR" id="Q730L4"/>
<dbReference type="MEROPS" id="A25.001"/>
<dbReference type="KEGG" id="bca:BCE_4402"/>
<dbReference type="HOGENOM" id="CLU_055087_1_0_9"/>
<dbReference type="Proteomes" id="UP000002527">
    <property type="component" value="Chromosome"/>
</dbReference>
<dbReference type="GO" id="GO:0004222">
    <property type="term" value="F:metalloendopeptidase activity"/>
    <property type="evidence" value="ECO:0007669"/>
    <property type="project" value="UniProtKB-UniRule"/>
</dbReference>
<dbReference type="GO" id="GO:0006508">
    <property type="term" value="P:proteolysis"/>
    <property type="evidence" value="ECO:0007669"/>
    <property type="project" value="UniProtKB-UniRule"/>
</dbReference>
<dbReference type="GO" id="GO:0009847">
    <property type="term" value="P:spore germination"/>
    <property type="evidence" value="ECO:0007669"/>
    <property type="project" value="UniProtKB-UniRule"/>
</dbReference>
<dbReference type="Gene3D" id="3.40.50.1450">
    <property type="entry name" value="HybD-like"/>
    <property type="match status" value="1"/>
</dbReference>
<dbReference type="HAMAP" id="MF_00626">
    <property type="entry name" value="Germination_prot"/>
    <property type="match status" value="1"/>
</dbReference>
<dbReference type="InterPro" id="IPR023430">
    <property type="entry name" value="Pept_HybD-like_dom_sf"/>
</dbReference>
<dbReference type="InterPro" id="IPR005080">
    <property type="entry name" value="Peptidase_A25"/>
</dbReference>
<dbReference type="NCBIfam" id="TIGR01441">
    <property type="entry name" value="GPR"/>
    <property type="match status" value="1"/>
</dbReference>
<dbReference type="Pfam" id="PF03418">
    <property type="entry name" value="Peptidase_A25"/>
    <property type="match status" value="1"/>
</dbReference>
<dbReference type="PIRSF" id="PIRSF019549">
    <property type="entry name" value="Peptidase_A25"/>
    <property type="match status" value="1"/>
</dbReference>
<dbReference type="SUPFAM" id="SSF53163">
    <property type="entry name" value="HybD-like"/>
    <property type="match status" value="1"/>
</dbReference>
<sequence>MKEPLDLSKYSVRTDLAVEAHQMLQERQEEQKGIEGVIVKEREEEGITVTKVTIDEAASDSMGKKPGNYLTLEVQGIRQQDTELQQKVERIFAKEFSYFLEEVGVTKEASCLIVGLGNWNVTPDALGPIVVENVLVTRHLFQLQPESVEEGFRPVSAIRPGVMGITGIETSDVIYGIIEKTKPDFVIAIDALAARSIERVNSTIQISDTGIHPGSGVGNKRKELSKETLGIPVIAIGVPTVVDAVSITSDTIDFILKHFGREMKEGNKPSRSLLPAGFTFGEKKKLTEEDMPDEKSRNMFLGAVGTLGDEEKRKLIYEVLSPLGHNLMVTPKEVDAFIEDMANVIASGLNAALHHQIDQDNTGAYTH</sequence>
<feature type="propeptide" id="PRO_0000026858" evidence="1">
    <location>
        <begin position="1"/>
        <end position="15"/>
    </location>
</feature>
<feature type="chain" id="PRO_0000026859" description="Germination protease">
    <location>
        <begin position="16"/>
        <end position="367"/>
    </location>
</feature>
<gene>
    <name evidence="1" type="primary">gpr</name>
    <name type="ordered locus">BCE_4402</name>
</gene>
<organism>
    <name type="scientific">Bacillus cereus (strain ATCC 10987 / NRS 248)</name>
    <dbReference type="NCBI Taxonomy" id="222523"/>
    <lineage>
        <taxon>Bacteria</taxon>
        <taxon>Bacillati</taxon>
        <taxon>Bacillota</taxon>
        <taxon>Bacilli</taxon>
        <taxon>Bacillales</taxon>
        <taxon>Bacillaceae</taxon>
        <taxon>Bacillus</taxon>
        <taxon>Bacillus cereus group</taxon>
    </lineage>
</organism>
<proteinExistence type="inferred from homology"/>
<reference key="1">
    <citation type="journal article" date="2004" name="Nucleic Acids Res.">
        <title>The genome sequence of Bacillus cereus ATCC 10987 reveals metabolic adaptations and a large plasmid related to Bacillus anthracis pXO1.</title>
        <authorList>
            <person name="Rasko D.A."/>
            <person name="Ravel J."/>
            <person name="Oekstad O.A."/>
            <person name="Helgason E."/>
            <person name="Cer R.Z."/>
            <person name="Jiang L."/>
            <person name="Shores K.A."/>
            <person name="Fouts D.E."/>
            <person name="Tourasse N.J."/>
            <person name="Angiuoli S.V."/>
            <person name="Kolonay J.F."/>
            <person name="Nelson W.C."/>
            <person name="Kolstoe A.-B."/>
            <person name="Fraser C.M."/>
            <person name="Read T.D."/>
        </authorList>
    </citation>
    <scope>NUCLEOTIDE SEQUENCE [LARGE SCALE GENOMIC DNA]</scope>
    <source>
        <strain>ATCC 10987 / NRS 248</strain>
    </source>
</reference>
<name>GPR_BACC1</name>
<accession>Q730L4</accession>
<protein>
    <recommendedName>
        <fullName evidence="1">Germination protease</fullName>
        <ecNumber evidence="1">3.4.24.78</ecNumber>
    </recommendedName>
    <alternativeName>
        <fullName evidence="1">GPR endopeptidase</fullName>
    </alternativeName>
    <alternativeName>
        <fullName evidence="1">Germination proteinase</fullName>
    </alternativeName>
    <alternativeName>
        <fullName evidence="1">Spore protease</fullName>
    </alternativeName>
</protein>
<keyword id="KW-0378">Hydrolase</keyword>
<keyword id="KW-0645">Protease</keyword>
<keyword id="KW-0865">Zymogen</keyword>